<sequence>MPAPILPLIEAAGRWPERGALVGLDLGTKTIGVAVSDPDRRLATGVETIQRKAFKADAARLLAICAERKVVGFVLGLPINMDGSEGPRAQSTRAFARNLAGLTDLPIGLWDERLSTAAVERELIGMDVSRAKRAEVIDTHAAIFILQGALDRLTTLRRSGQ</sequence>
<gene>
    <name type="ordered locus">BRADO4497</name>
</gene>
<dbReference type="EC" id="3.1.-.-" evidence="1"/>
<dbReference type="EMBL" id="CU234118">
    <property type="protein sequence ID" value="CAL78235.1"/>
    <property type="molecule type" value="Genomic_DNA"/>
</dbReference>
<dbReference type="RefSeq" id="WP_011927345.1">
    <property type="nucleotide sequence ID" value="NC_009445.1"/>
</dbReference>
<dbReference type="SMR" id="A4YWF9"/>
<dbReference type="STRING" id="114615.BRADO4497"/>
<dbReference type="KEGG" id="bra:BRADO4497"/>
<dbReference type="eggNOG" id="COG0816">
    <property type="taxonomic scope" value="Bacteria"/>
</dbReference>
<dbReference type="HOGENOM" id="CLU_098240_1_1_5"/>
<dbReference type="OrthoDB" id="9796140at2"/>
<dbReference type="Proteomes" id="UP000001994">
    <property type="component" value="Chromosome"/>
</dbReference>
<dbReference type="GO" id="GO:0005829">
    <property type="term" value="C:cytosol"/>
    <property type="evidence" value="ECO:0007669"/>
    <property type="project" value="TreeGrafter"/>
</dbReference>
<dbReference type="GO" id="GO:0004518">
    <property type="term" value="F:nuclease activity"/>
    <property type="evidence" value="ECO:0007669"/>
    <property type="project" value="UniProtKB-KW"/>
</dbReference>
<dbReference type="GO" id="GO:0000967">
    <property type="term" value="P:rRNA 5'-end processing"/>
    <property type="evidence" value="ECO:0007669"/>
    <property type="project" value="UniProtKB-UniRule"/>
</dbReference>
<dbReference type="CDD" id="cd16964">
    <property type="entry name" value="YqgF"/>
    <property type="match status" value="1"/>
</dbReference>
<dbReference type="Gene3D" id="3.30.420.140">
    <property type="entry name" value="YqgF/RNase H-like domain"/>
    <property type="match status" value="1"/>
</dbReference>
<dbReference type="HAMAP" id="MF_00651">
    <property type="entry name" value="Nuclease_YqgF"/>
    <property type="match status" value="1"/>
</dbReference>
<dbReference type="InterPro" id="IPR012337">
    <property type="entry name" value="RNaseH-like_sf"/>
</dbReference>
<dbReference type="InterPro" id="IPR005227">
    <property type="entry name" value="YqgF"/>
</dbReference>
<dbReference type="InterPro" id="IPR006641">
    <property type="entry name" value="YqgF/RNaseH-like_dom"/>
</dbReference>
<dbReference type="InterPro" id="IPR037027">
    <property type="entry name" value="YqgF/RNaseH-like_dom_sf"/>
</dbReference>
<dbReference type="NCBIfam" id="TIGR00250">
    <property type="entry name" value="RNAse_H_YqgF"/>
    <property type="match status" value="1"/>
</dbReference>
<dbReference type="PANTHER" id="PTHR33317">
    <property type="entry name" value="POLYNUCLEOTIDYL TRANSFERASE, RIBONUCLEASE H-LIKE SUPERFAMILY PROTEIN"/>
    <property type="match status" value="1"/>
</dbReference>
<dbReference type="PANTHER" id="PTHR33317:SF4">
    <property type="entry name" value="POLYNUCLEOTIDYL TRANSFERASE, RIBONUCLEASE H-LIKE SUPERFAMILY PROTEIN"/>
    <property type="match status" value="1"/>
</dbReference>
<dbReference type="Pfam" id="PF03652">
    <property type="entry name" value="RuvX"/>
    <property type="match status" value="1"/>
</dbReference>
<dbReference type="SMART" id="SM00732">
    <property type="entry name" value="YqgFc"/>
    <property type="match status" value="1"/>
</dbReference>
<dbReference type="SUPFAM" id="SSF53098">
    <property type="entry name" value="Ribonuclease H-like"/>
    <property type="match status" value="1"/>
</dbReference>
<evidence type="ECO:0000255" key="1">
    <source>
        <dbReference type="HAMAP-Rule" id="MF_00651"/>
    </source>
</evidence>
<accession>A4YWF9</accession>
<name>YQGF_BRASO</name>
<feature type="chain" id="PRO_1000061489" description="Putative pre-16S rRNA nuclease">
    <location>
        <begin position="1"/>
        <end position="161"/>
    </location>
</feature>
<reference key="1">
    <citation type="journal article" date="2007" name="Science">
        <title>Legumes symbioses: absence of nod genes in photosynthetic bradyrhizobia.</title>
        <authorList>
            <person name="Giraud E."/>
            <person name="Moulin L."/>
            <person name="Vallenet D."/>
            <person name="Barbe V."/>
            <person name="Cytryn E."/>
            <person name="Avarre J.-C."/>
            <person name="Jaubert M."/>
            <person name="Simon D."/>
            <person name="Cartieaux F."/>
            <person name="Prin Y."/>
            <person name="Bena G."/>
            <person name="Hannibal L."/>
            <person name="Fardoux J."/>
            <person name="Kojadinovic M."/>
            <person name="Vuillet L."/>
            <person name="Lajus A."/>
            <person name="Cruveiller S."/>
            <person name="Rouy Z."/>
            <person name="Mangenot S."/>
            <person name="Segurens B."/>
            <person name="Dossat C."/>
            <person name="Franck W.L."/>
            <person name="Chang W.-S."/>
            <person name="Saunders E."/>
            <person name="Bruce D."/>
            <person name="Richardson P."/>
            <person name="Normand P."/>
            <person name="Dreyfus B."/>
            <person name="Pignol D."/>
            <person name="Stacey G."/>
            <person name="Emerich D."/>
            <person name="Vermeglio A."/>
            <person name="Medigue C."/>
            <person name="Sadowsky M."/>
        </authorList>
    </citation>
    <scope>NUCLEOTIDE SEQUENCE [LARGE SCALE GENOMIC DNA]</scope>
    <source>
        <strain>ORS 278</strain>
    </source>
</reference>
<comment type="function">
    <text evidence="1">Could be a nuclease involved in processing of the 5'-end of pre-16S rRNA.</text>
</comment>
<comment type="subcellular location">
    <subcellularLocation>
        <location evidence="1">Cytoplasm</location>
    </subcellularLocation>
</comment>
<comment type="similarity">
    <text evidence="1">Belongs to the YqgF nuclease family.</text>
</comment>
<keyword id="KW-0963">Cytoplasm</keyword>
<keyword id="KW-0378">Hydrolase</keyword>
<keyword id="KW-0540">Nuclease</keyword>
<keyword id="KW-1185">Reference proteome</keyword>
<keyword id="KW-0690">Ribosome biogenesis</keyword>
<proteinExistence type="inferred from homology"/>
<organism>
    <name type="scientific">Bradyrhizobium sp. (strain ORS 278)</name>
    <dbReference type="NCBI Taxonomy" id="114615"/>
    <lineage>
        <taxon>Bacteria</taxon>
        <taxon>Pseudomonadati</taxon>
        <taxon>Pseudomonadota</taxon>
        <taxon>Alphaproteobacteria</taxon>
        <taxon>Hyphomicrobiales</taxon>
        <taxon>Nitrobacteraceae</taxon>
        <taxon>Bradyrhizobium</taxon>
    </lineage>
</organism>
<protein>
    <recommendedName>
        <fullName evidence="1">Putative pre-16S rRNA nuclease</fullName>
        <ecNumber evidence="1">3.1.-.-</ecNumber>
    </recommendedName>
</protein>